<organism>
    <name type="scientific">Schizosaccharomyces pombe (strain 972 / ATCC 24843)</name>
    <name type="common">Fission yeast</name>
    <dbReference type="NCBI Taxonomy" id="284812"/>
    <lineage>
        <taxon>Eukaryota</taxon>
        <taxon>Fungi</taxon>
        <taxon>Dikarya</taxon>
        <taxon>Ascomycota</taxon>
        <taxon>Taphrinomycotina</taxon>
        <taxon>Schizosaccharomycetes</taxon>
        <taxon>Schizosaccharomycetales</taxon>
        <taxon>Schizosaccharomycetaceae</taxon>
        <taxon>Schizosaccharomyces</taxon>
    </lineage>
</organism>
<accession>P87311</accession>
<evidence type="ECO:0000255" key="1">
    <source>
        <dbReference type="PROSITE-ProRule" id="PRU00134"/>
    </source>
</evidence>
<evidence type="ECO:0000256" key="2">
    <source>
        <dbReference type="SAM" id="MobiDB-lite"/>
    </source>
</evidence>
<evidence type="ECO:0000269" key="3">
    <source>
    </source>
</evidence>
<evidence type="ECO:0000305" key="4"/>
<protein>
    <recommendedName>
        <fullName>MYND-type zinc finger protein C31F10.10c</fullName>
    </recommendedName>
</protein>
<keyword id="KW-0963">Cytoplasm</keyword>
<keyword id="KW-0206">Cytoskeleton</keyword>
<keyword id="KW-0479">Metal-binding</keyword>
<keyword id="KW-0539">Nucleus</keyword>
<keyword id="KW-1185">Reference proteome</keyword>
<keyword id="KW-0862">Zinc</keyword>
<keyword id="KW-0863">Zinc-finger</keyword>
<name>MUB1_SCHPO</name>
<reference key="1">
    <citation type="journal article" date="2002" name="Nature">
        <title>The genome sequence of Schizosaccharomyces pombe.</title>
        <authorList>
            <person name="Wood V."/>
            <person name="Gwilliam R."/>
            <person name="Rajandream M.A."/>
            <person name="Lyne M.H."/>
            <person name="Lyne R."/>
            <person name="Stewart A."/>
            <person name="Sgouros J.G."/>
            <person name="Peat N."/>
            <person name="Hayles J."/>
            <person name="Baker S.G."/>
            <person name="Basham D."/>
            <person name="Bowman S."/>
            <person name="Brooks K."/>
            <person name="Brown D."/>
            <person name="Brown S."/>
            <person name="Chillingworth T."/>
            <person name="Churcher C.M."/>
            <person name="Collins M."/>
            <person name="Connor R."/>
            <person name="Cronin A."/>
            <person name="Davis P."/>
            <person name="Feltwell T."/>
            <person name="Fraser A."/>
            <person name="Gentles S."/>
            <person name="Goble A."/>
            <person name="Hamlin N."/>
            <person name="Harris D.E."/>
            <person name="Hidalgo J."/>
            <person name="Hodgson G."/>
            <person name="Holroyd S."/>
            <person name="Hornsby T."/>
            <person name="Howarth S."/>
            <person name="Huckle E.J."/>
            <person name="Hunt S."/>
            <person name="Jagels K."/>
            <person name="James K.D."/>
            <person name="Jones L."/>
            <person name="Jones M."/>
            <person name="Leather S."/>
            <person name="McDonald S."/>
            <person name="McLean J."/>
            <person name="Mooney P."/>
            <person name="Moule S."/>
            <person name="Mungall K.L."/>
            <person name="Murphy L.D."/>
            <person name="Niblett D."/>
            <person name="Odell C."/>
            <person name="Oliver K."/>
            <person name="O'Neil S."/>
            <person name="Pearson D."/>
            <person name="Quail M.A."/>
            <person name="Rabbinowitsch E."/>
            <person name="Rutherford K.M."/>
            <person name="Rutter S."/>
            <person name="Saunders D."/>
            <person name="Seeger K."/>
            <person name="Sharp S."/>
            <person name="Skelton J."/>
            <person name="Simmonds M.N."/>
            <person name="Squares R."/>
            <person name="Squares S."/>
            <person name="Stevens K."/>
            <person name="Taylor K."/>
            <person name="Taylor R.G."/>
            <person name="Tivey A."/>
            <person name="Walsh S.V."/>
            <person name="Warren T."/>
            <person name="Whitehead S."/>
            <person name="Woodward J.R."/>
            <person name="Volckaert G."/>
            <person name="Aert R."/>
            <person name="Robben J."/>
            <person name="Grymonprez B."/>
            <person name="Weltjens I."/>
            <person name="Vanstreels E."/>
            <person name="Rieger M."/>
            <person name="Schaefer M."/>
            <person name="Mueller-Auer S."/>
            <person name="Gabel C."/>
            <person name="Fuchs M."/>
            <person name="Duesterhoeft A."/>
            <person name="Fritzc C."/>
            <person name="Holzer E."/>
            <person name="Moestl D."/>
            <person name="Hilbert H."/>
            <person name="Borzym K."/>
            <person name="Langer I."/>
            <person name="Beck A."/>
            <person name="Lehrach H."/>
            <person name="Reinhardt R."/>
            <person name="Pohl T.M."/>
            <person name="Eger P."/>
            <person name="Zimmermann W."/>
            <person name="Wedler H."/>
            <person name="Wambutt R."/>
            <person name="Purnelle B."/>
            <person name="Goffeau A."/>
            <person name="Cadieu E."/>
            <person name="Dreano S."/>
            <person name="Gloux S."/>
            <person name="Lelaure V."/>
            <person name="Mottier S."/>
            <person name="Galibert F."/>
            <person name="Aves S.J."/>
            <person name="Xiang Z."/>
            <person name="Hunt C."/>
            <person name="Moore K."/>
            <person name="Hurst S.M."/>
            <person name="Lucas M."/>
            <person name="Rochet M."/>
            <person name="Gaillardin C."/>
            <person name="Tallada V.A."/>
            <person name="Garzon A."/>
            <person name="Thode G."/>
            <person name="Daga R.R."/>
            <person name="Cruzado L."/>
            <person name="Jimenez J."/>
            <person name="Sanchez M."/>
            <person name="del Rey F."/>
            <person name="Benito J."/>
            <person name="Dominguez A."/>
            <person name="Revuelta J.L."/>
            <person name="Moreno S."/>
            <person name="Armstrong J."/>
            <person name="Forsburg S.L."/>
            <person name="Cerutti L."/>
            <person name="Lowe T."/>
            <person name="McCombie W.R."/>
            <person name="Paulsen I."/>
            <person name="Potashkin J."/>
            <person name="Shpakovski G.V."/>
            <person name="Ussery D."/>
            <person name="Barrell B.G."/>
            <person name="Nurse P."/>
        </authorList>
    </citation>
    <scope>NUCLEOTIDE SEQUENCE [LARGE SCALE GENOMIC DNA]</scope>
    <source>
        <strain>972 / ATCC 24843</strain>
    </source>
</reference>
<reference key="2">
    <citation type="journal article" date="2006" name="Nat. Biotechnol.">
        <title>ORFeome cloning and global analysis of protein localization in the fission yeast Schizosaccharomyces pombe.</title>
        <authorList>
            <person name="Matsuyama A."/>
            <person name="Arai R."/>
            <person name="Yashiroda Y."/>
            <person name="Shirai A."/>
            <person name="Kamata A."/>
            <person name="Sekido S."/>
            <person name="Kobayashi Y."/>
            <person name="Hashimoto A."/>
            <person name="Hamamoto M."/>
            <person name="Hiraoka Y."/>
            <person name="Horinouchi S."/>
            <person name="Yoshida M."/>
        </authorList>
    </citation>
    <scope>SUBCELLULAR LOCATION [LARGE SCALE ANALYSIS]</scope>
</reference>
<gene>
    <name type="ORF">SPBC31F10.10c</name>
</gene>
<proteinExistence type="inferred from homology"/>
<dbReference type="EMBL" id="CU329671">
    <property type="protein sequence ID" value="CAB10087.1"/>
    <property type="molecule type" value="Genomic_DNA"/>
</dbReference>
<dbReference type="PIR" id="T40213">
    <property type="entry name" value="T40213"/>
</dbReference>
<dbReference type="SMR" id="P87311"/>
<dbReference type="BioGRID" id="276852">
    <property type="interactions" value="219"/>
</dbReference>
<dbReference type="FunCoup" id="P87311">
    <property type="interactions" value="1"/>
</dbReference>
<dbReference type="STRING" id="284812.P87311"/>
<dbReference type="iPTMnet" id="P87311"/>
<dbReference type="PaxDb" id="4896-SPBC31F10.10c.1"/>
<dbReference type="EnsemblFungi" id="SPBC31F10.10c.1">
    <property type="protein sequence ID" value="SPBC31F10.10c.1:pep"/>
    <property type="gene ID" value="SPBC31F10.10c"/>
</dbReference>
<dbReference type="KEGG" id="spo:2540322"/>
<dbReference type="PomBase" id="SPBC31F10.10c"/>
<dbReference type="VEuPathDB" id="FungiDB:SPBC31F10.10c"/>
<dbReference type="eggNOG" id="ENOG502QTM3">
    <property type="taxonomic scope" value="Eukaryota"/>
</dbReference>
<dbReference type="HOGENOM" id="CLU_014851_2_0_1"/>
<dbReference type="InParanoid" id="P87311"/>
<dbReference type="OMA" id="QDMQYWA"/>
<dbReference type="PhylomeDB" id="P87311"/>
<dbReference type="PRO" id="PR:P87311"/>
<dbReference type="Proteomes" id="UP000002485">
    <property type="component" value="Chromosome II"/>
</dbReference>
<dbReference type="GO" id="GO:0032153">
    <property type="term" value="C:cell division site"/>
    <property type="evidence" value="ECO:0007005"/>
    <property type="project" value="PomBase"/>
</dbReference>
<dbReference type="GO" id="GO:0005829">
    <property type="term" value="C:cytosol"/>
    <property type="evidence" value="ECO:0007005"/>
    <property type="project" value="PomBase"/>
</dbReference>
<dbReference type="GO" id="GO:0044732">
    <property type="term" value="C:mitotic spindle pole body"/>
    <property type="evidence" value="ECO:0007005"/>
    <property type="project" value="PomBase"/>
</dbReference>
<dbReference type="GO" id="GO:1990304">
    <property type="term" value="C:MUB1-RAD6-UBR2 ubiquitin ligase complex"/>
    <property type="evidence" value="ECO:0000318"/>
    <property type="project" value="GO_Central"/>
</dbReference>
<dbReference type="GO" id="GO:0005634">
    <property type="term" value="C:nucleus"/>
    <property type="evidence" value="ECO:0007005"/>
    <property type="project" value="PomBase"/>
</dbReference>
<dbReference type="GO" id="GO:0008270">
    <property type="term" value="F:zinc ion binding"/>
    <property type="evidence" value="ECO:0007669"/>
    <property type="project" value="UniProtKB-KW"/>
</dbReference>
<dbReference type="GO" id="GO:0007163">
    <property type="term" value="P:establishment or maintenance of cell polarity"/>
    <property type="evidence" value="ECO:0000318"/>
    <property type="project" value="GO_Central"/>
</dbReference>
<dbReference type="GO" id="GO:1900735">
    <property type="term" value="P:positive regulation of flocculation"/>
    <property type="evidence" value="ECO:0000316"/>
    <property type="project" value="PomBase"/>
</dbReference>
<dbReference type="GO" id="GO:0006511">
    <property type="term" value="P:ubiquitin-dependent protein catabolic process"/>
    <property type="evidence" value="ECO:0000318"/>
    <property type="project" value="GO_Central"/>
</dbReference>
<dbReference type="Gene3D" id="6.10.140.2220">
    <property type="match status" value="1"/>
</dbReference>
<dbReference type="Gene3D" id="1.25.10.10">
    <property type="entry name" value="Leucine-rich Repeat Variant"/>
    <property type="match status" value="1"/>
</dbReference>
<dbReference type="InterPro" id="IPR011989">
    <property type="entry name" value="ARM-like"/>
</dbReference>
<dbReference type="InterPro" id="IPR051664">
    <property type="entry name" value="MYND-type_zinc_finger"/>
</dbReference>
<dbReference type="InterPro" id="IPR002893">
    <property type="entry name" value="Znf_MYND"/>
</dbReference>
<dbReference type="PANTHER" id="PTHR47442">
    <property type="entry name" value="MYND-TYPE ZINC FINGER PROTEIN MUB1"/>
    <property type="match status" value="1"/>
</dbReference>
<dbReference type="PANTHER" id="PTHR47442:SF1">
    <property type="entry name" value="MYND-TYPE ZINC FINGER PROTEIN MUB1"/>
    <property type="match status" value="1"/>
</dbReference>
<dbReference type="Pfam" id="PF01753">
    <property type="entry name" value="zf-MYND"/>
    <property type="match status" value="1"/>
</dbReference>
<dbReference type="SUPFAM" id="SSF144232">
    <property type="entry name" value="HIT/MYND zinc finger-like"/>
    <property type="match status" value="1"/>
</dbReference>
<dbReference type="PROSITE" id="PS01360">
    <property type="entry name" value="ZF_MYND_1"/>
    <property type="match status" value="1"/>
</dbReference>
<dbReference type="PROSITE" id="PS50865">
    <property type="entry name" value="ZF_MYND_2"/>
    <property type="match status" value="1"/>
</dbReference>
<feature type="chain" id="PRO_0000218324" description="MYND-type zinc finger protein C31F10.10c">
    <location>
        <begin position="1"/>
        <end position="574"/>
    </location>
</feature>
<feature type="zinc finger region" description="MYND-type; degenerate" evidence="1">
    <location>
        <begin position="482"/>
        <end position="523"/>
    </location>
</feature>
<feature type="region of interest" description="Disordered" evidence="2">
    <location>
        <begin position="207"/>
        <end position="253"/>
    </location>
</feature>
<feature type="region of interest" description="Disordered" evidence="2">
    <location>
        <begin position="283"/>
        <end position="307"/>
    </location>
</feature>
<feature type="region of interest" description="Disordered" evidence="2">
    <location>
        <begin position="534"/>
        <end position="574"/>
    </location>
</feature>
<feature type="compositionally biased region" description="Polar residues" evidence="2">
    <location>
        <begin position="243"/>
        <end position="253"/>
    </location>
</feature>
<feature type="compositionally biased region" description="Polar residues" evidence="2">
    <location>
        <begin position="283"/>
        <end position="301"/>
    </location>
</feature>
<feature type="compositionally biased region" description="Low complexity" evidence="2">
    <location>
        <begin position="542"/>
        <end position="556"/>
    </location>
</feature>
<feature type="compositionally biased region" description="Polar residues" evidence="2">
    <location>
        <begin position="562"/>
        <end position="574"/>
    </location>
</feature>
<feature type="binding site" evidence="1">
    <location>
        <position position="498"/>
    </location>
    <ligand>
        <name>Zn(2+)</name>
        <dbReference type="ChEBI" id="CHEBI:29105"/>
    </ligand>
</feature>
<feature type="binding site" evidence="1">
    <location>
        <position position="501"/>
    </location>
    <ligand>
        <name>Zn(2+)</name>
        <dbReference type="ChEBI" id="CHEBI:29105"/>
    </ligand>
</feature>
<feature type="binding site" evidence="1">
    <location>
        <position position="519"/>
    </location>
    <ligand>
        <name>Zn(2+)</name>
        <dbReference type="ChEBI" id="CHEBI:29105"/>
    </ligand>
</feature>
<feature type="binding site" evidence="1">
    <location>
        <position position="523"/>
    </location>
    <ligand>
        <name>Zn(2+)</name>
        <dbReference type="ChEBI" id="CHEBI:29105"/>
    </ligand>
</feature>
<comment type="subcellular location">
    <subcellularLocation>
        <location evidence="3">Nucleus</location>
    </subcellularLocation>
    <subcellularLocation>
        <location evidence="3">Cytoplasm</location>
    </subcellularLocation>
    <subcellularLocation>
        <location evidence="3">Cytoplasm</location>
        <location evidence="3">Cytoskeleton</location>
        <location evidence="3">Microtubule organizing center</location>
        <location evidence="3">Spindle pole body</location>
    </subcellularLocation>
</comment>
<comment type="similarity">
    <text evidence="4">Belongs to the MUB1/samB family.</text>
</comment>
<sequence>MRESNVSIVWNNKASVTINTVLYDRRALDCDSEMSLMNSLSHLVYLTSTSPKIREILTMDGGLMRLMNILRAGRGQTFARMTIWQLALQCVVNVGIRGSEAIRIRVVEAGIVPIVVTLLDDFLFALESVVSHHSRFQFSLTPSTTPPPSSASAPFPINSNISNSLDSVSQHNSSADSLFVNGDVPSPFGASTASSSSRRVYSVDLRDSGDVQLPNQSTFRHSVNRDLLGSSSTTSHDRSSGSIYSNDSFQDPRVQANSPLTIQRISSAAPSTPTSTENVNYNMTTPSSPSYSRQTGPASETINDEIDSPNFFFPTPLNIMTTTQDSSRDVQLSLNNVQSQALNNRQRRNQLLPGVPSTSALLDGRRPENVVDYHGIASFFDNFDKKINKLPREEDILFGLQILAYTSKNYFHMRPYFESSKDVPSLRMSPLRSGSKTWNIFQLVEQFTLKFYPPQVQYWARAIMNNYCRKDESHGGIRRCANLLCNKWEEHSRQFAKCRRCRRTKYCSKECQHQAWPGHSRWCRVIHKDGRNSKRESSKINSVTESESTASPAASVIPVGTESVTSSTQSDSRL</sequence>